<proteinExistence type="evidence at protein level"/>
<gene>
    <name type="primary">Cdc37</name>
</gene>
<evidence type="ECO:0000250" key="1">
    <source>
        <dbReference type="UniProtKB" id="Q16543"/>
    </source>
</evidence>
<evidence type="ECO:0000256" key="2">
    <source>
        <dbReference type="SAM" id="MobiDB-lite"/>
    </source>
</evidence>
<evidence type="ECO:0000269" key="3">
    <source>
    </source>
</evidence>
<evidence type="ECO:0000305" key="4"/>
<evidence type="ECO:0007744" key="5">
    <source>
    </source>
</evidence>
<comment type="function">
    <text evidence="1">Co-chaperone that binds to numerous kinases and promotes their interaction with the Hsp90 complex, resulting in stabilization and promotion of their activity. Inhibits HSP90AA1 ATPase activity.</text>
</comment>
<comment type="subunit">
    <text evidence="1 3">Probably forms a complex composed of chaperones HSP90 and HSP70, co-chaperones STIP1/HOP, CDC37, PPP5C, PTGES3/p23, TSC1 and client protein TSC2 (By similarity). Probably forms a complex composed of chaperones HSP90 and HSP70, co-chaperones CDC37, PPP5C, TSC1 and client protein TSC2, CDK4, AKT, RAF1 and NR3C1; this complex does not contain co-chaperones STIP1/HOP and PTGES3/p23 (By similarity). Forms a complex with Hsp90/HSP90AB1 and CDK6 (By similarity). Interacts with HSP90AA1 (By similarity). Interacts with AR, CDK4, CDK6 and EIF2AK1 (By similarity). Interacts with RB1 (PubMed:8945638). Interacts with KSR1 (By similarity). Interacts with FLCN, FNIP1 and FNIP2 (By similarity).</text>
</comment>
<comment type="subcellular location">
    <subcellularLocation>
        <location evidence="1">Cytoplasm</location>
    </subcellularLocation>
</comment>
<comment type="PTM">
    <text evidence="1">Constitutively sumoylated by UBE2I.</text>
</comment>
<comment type="similarity">
    <text evidence="4">Belongs to the CDC37 family.</text>
</comment>
<organism>
    <name type="scientific">Rattus norvegicus</name>
    <name type="common">Rat</name>
    <dbReference type="NCBI Taxonomy" id="10116"/>
    <lineage>
        <taxon>Eukaryota</taxon>
        <taxon>Metazoa</taxon>
        <taxon>Chordata</taxon>
        <taxon>Craniata</taxon>
        <taxon>Vertebrata</taxon>
        <taxon>Euteleostomi</taxon>
        <taxon>Mammalia</taxon>
        <taxon>Eutheria</taxon>
        <taxon>Euarchontoglires</taxon>
        <taxon>Glires</taxon>
        <taxon>Rodentia</taxon>
        <taxon>Myomorpha</taxon>
        <taxon>Muroidea</taxon>
        <taxon>Muridae</taxon>
        <taxon>Murinae</taxon>
        <taxon>Rattus</taxon>
    </lineage>
</organism>
<name>CDC37_RAT</name>
<keyword id="KW-0007">Acetylation</keyword>
<keyword id="KW-0143">Chaperone</keyword>
<keyword id="KW-0963">Cytoplasm</keyword>
<keyword id="KW-0597">Phosphoprotein</keyword>
<keyword id="KW-1185">Reference proteome</keyword>
<keyword id="KW-0832">Ubl conjugation</keyword>
<accession>Q63692</accession>
<accession>Q8CH95</accession>
<dbReference type="EMBL" id="D26564">
    <property type="protein sequence ID" value="BAA05618.1"/>
    <property type="molecule type" value="mRNA"/>
</dbReference>
<dbReference type="EMBL" id="AB097113">
    <property type="protein sequence ID" value="BAC54286.1"/>
    <property type="molecule type" value="mRNA"/>
</dbReference>
<dbReference type="EMBL" id="BC061720">
    <property type="protein sequence ID" value="AAH61720.1"/>
    <property type="molecule type" value="mRNA"/>
</dbReference>
<dbReference type="RefSeq" id="NP_446195.2">
    <property type="nucleotide sequence ID" value="NM_053743.2"/>
</dbReference>
<dbReference type="SMR" id="Q63692"/>
<dbReference type="BioGRID" id="250380">
    <property type="interactions" value="6"/>
</dbReference>
<dbReference type="FunCoup" id="Q63692">
    <property type="interactions" value="3347"/>
</dbReference>
<dbReference type="IntAct" id="Q63692">
    <property type="interactions" value="4"/>
</dbReference>
<dbReference type="MINT" id="Q63692"/>
<dbReference type="STRING" id="10116.ENSRNOP00000051248"/>
<dbReference type="GlyGen" id="Q63692">
    <property type="glycosylation" value="1 site, 1 O-linked glycan (1 site)"/>
</dbReference>
<dbReference type="iPTMnet" id="Q63692"/>
<dbReference type="PhosphoSitePlus" id="Q63692"/>
<dbReference type="jPOST" id="Q63692"/>
<dbReference type="PaxDb" id="10116-ENSRNOP00000051248"/>
<dbReference type="GeneID" id="114562"/>
<dbReference type="KEGG" id="rno:114562"/>
<dbReference type="UCSC" id="RGD:71006">
    <property type="organism name" value="rat"/>
</dbReference>
<dbReference type="AGR" id="RGD:71006"/>
<dbReference type="CTD" id="11140"/>
<dbReference type="RGD" id="71006">
    <property type="gene designation" value="Cdc37"/>
</dbReference>
<dbReference type="eggNOG" id="KOG2260">
    <property type="taxonomic scope" value="Eukaryota"/>
</dbReference>
<dbReference type="InParanoid" id="Q63692"/>
<dbReference type="PhylomeDB" id="Q63692"/>
<dbReference type="Reactome" id="R-RNO-1227986">
    <property type="pathway name" value="Signaling by ERBB2"/>
</dbReference>
<dbReference type="Reactome" id="R-RNO-5675482">
    <property type="pathway name" value="Regulation of necroptotic cell death"/>
</dbReference>
<dbReference type="Reactome" id="R-RNO-8863795">
    <property type="pathway name" value="Downregulation of ERBB2 signaling"/>
</dbReference>
<dbReference type="Reactome" id="R-RNO-9013418">
    <property type="pathway name" value="RHOBTB2 GTPase cycle"/>
</dbReference>
<dbReference type="Reactome" id="R-RNO-9652282">
    <property type="pathway name" value="Drug-mediated inhibition of ERBB2 signaling"/>
</dbReference>
<dbReference type="PRO" id="PR:Q63692"/>
<dbReference type="Proteomes" id="UP000002494">
    <property type="component" value="Unplaced"/>
</dbReference>
<dbReference type="GO" id="GO:0005737">
    <property type="term" value="C:cytoplasm"/>
    <property type="evidence" value="ECO:0000318"/>
    <property type="project" value="GO_Central"/>
</dbReference>
<dbReference type="GO" id="GO:0005829">
    <property type="term" value="C:cytosol"/>
    <property type="evidence" value="ECO:0000266"/>
    <property type="project" value="RGD"/>
</dbReference>
<dbReference type="GO" id="GO:1990565">
    <property type="term" value="C:HSP90-CDC37 chaperone complex"/>
    <property type="evidence" value="ECO:0000266"/>
    <property type="project" value="RGD"/>
</dbReference>
<dbReference type="GO" id="GO:0101031">
    <property type="term" value="C:protein folding chaperone complex"/>
    <property type="evidence" value="ECO:0000266"/>
    <property type="project" value="RGD"/>
</dbReference>
<dbReference type="GO" id="GO:0032991">
    <property type="term" value="C:protein-containing complex"/>
    <property type="evidence" value="ECO:0000314"/>
    <property type="project" value="RGD"/>
</dbReference>
<dbReference type="GO" id="GO:0032587">
    <property type="term" value="C:ruffle membrane"/>
    <property type="evidence" value="ECO:0000314"/>
    <property type="project" value="RGD"/>
</dbReference>
<dbReference type="GO" id="GO:0031072">
    <property type="term" value="F:heat shock protein binding"/>
    <property type="evidence" value="ECO:0000266"/>
    <property type="project" value="RGD"/>
</dbReference>
<dbReference type="GO" id="GO:0051879">
    <property type="term" value="F:Hsp90 protein binding"/>
    <property type="evidence" value="ECO:0000266"/>
    <property type="project" value="RGD"/>
</dbReference>
<dbReference type="GO" id="GO:0019900">
    <property type="term" value="F:kinase binding"/>
    <property type="evidence" value="ECO:0000266"/>
    <property type="project" value="RGD"/>
</dbReference>
<dbReference type="GO" id="GO:0031435">
    <property type="term" value="F:mitogen-activated protein kinase kinase kinase binding"/>
    <property type="evidence" value="ECO:0000353"/>
    <property type="project" value="RGD"/>
</dbReference>
<dbReference type="GO" id="GO:0043422">
    <property type="term" value="F:protein kinase B binding"/>
    <property type="evidence" value="ECO:0000353"/>
    <property type="project" value="RGD"/>
</dbReference>
<dbReference type="GO" id="GO:0019901">
    <property type="term" value="F:protein kinase binding"/>
    <property type="evidence" value="ECO:0000353"/>
    <property type="project" value="RGD"/>
</dbReference>
<dbReference type="GO" id="GO:0051087">
    <property type="term" value="F:protein-folding chaperone binding"/>
    <property type="evidence" value="ECO:0000353"/>
    <property type="project" value="RGD"/>
</dbReference>
<dbReference type="GO" id="GO:0097110">
    <property type="term" value="F:scaffold protein binding"/>
    <property type="evidence" value="ECO:0000266"/>
    <property type="project" value="RGD"/>
</dbReference>
<dbReference type="GO" id="GO:0001222">
    <property type="term" value="F:transcription corepressor binding"/>
    <property type="evidence" value="ECO:0000353"/>
    <property type="project" value="RGD"/>
</dbReference>
<dbReference type="GO" id="GO:0051082">
    <property type="term" value="F:unfolded protein binding"/>
    <property type="evidence" value="ECO:0000318"/>
    <property type="project" value="GO_Central"/>
</dbReference>
<dbReference type="GO" id="GO:1905091">
    <property type="term" value="P:positive regulation of type 2 mitophagy"/>
    <property type="evidence" value="ECO:0000266"/>
    <property type="project" value="RGD"/>
</dbReference>
<dbReference type="GO" id="GO:0010608">
    <property type="term" value="P:post-transcriptional regulation of gene expression"/>
    <property type="evidence" value="ECO:0000266"/>
    <property type="project" value="RGD"/>
</dbReference>
<dbReference type="GO" id="GO:0006457">
    <property type="term" value="P:protein folding"/>
    <property type="evidence" value="ECO:0000318"/>
    <property type="project" value="GO_Central"/>
</dbReference>
<dbReference type="GO" id="GO:0050821">
    <property type="term" value="P:protein stabilization"/>
    <property type="evidence" value="ECO:0000318"/>
    <property type="project" value="GO_Central"/>
</dbReference>
<dbReference type="GO" id="GO:0060338">
    <property type="term" value="P:regulation of type I interferon-mediated signaling pathway"/>
    <property type="evidence" value="ECO:0000266"/>
    <property type="project" value="RGD"/>
</dbReference>
<dbReference type="GO" id="GO:0060334">
    <property type="term" value="P:regulation of type II interferon-mediated signaling pathway"/>
    <property type="evidence" value="ECO:0000266"/>
    <property type="project" value="RGD"/>
</dbReference>
<dbReference type="FunFam" id="1.20.58.610:FF:000001">
    <property type="entry name" value="Hsp90 co-chaperone Cdc37-like 1"/>
    <property type="match status" value="1"/>
</dbReference>
<dbReference type="Gene3D" id="6.10.140.250">
    <property type="match status" value="1"/>
</dbReference>
<dbReference type="Gene3D" id="1.20.58.610">
    <property type="entry name" value="Cdc37, Hsp90 binding domain"/>
    <property type="match status" value="1"/>
</dbReference>
<dbReference type="InterPro" id="IPR004918">
    <property type="entry name" value="Cdc37"/>
</dbReference>
<dbReference type="InterPro" id="IPR013873">
    <property type="entry name" value="Cdc37_C"/>
</dbReference>
<dbReference type="InterPro" id="IPR013874">
    <property type="entry name" value="Cdc37_Hsp90-bd"/>
</dbReference>
<dbReference type="InterPro" id="IPR038189">
    <property type="entry name" value="Cdc37_Hsp90-bd_sf"/>
</dbReference>
<dbReference type="InterPro" id="IPR013855">
    <property type="entry name" value="Cdc37_N_dom"/>
</dbReference>
<dbReference type="PANTHER" id="PTHR12800">
    <property type="entry name" value="CDC37-RELATED"/>
    <property type="match status" value="1"/>
</dbReference>
<dbReference type="PANTHER" id="PTHR12800:SF3">
    <property type="entry name" value="HSP90 CO-CHAPERONE CDC37"/>
    <property type="match status" value="1"/>
</dbReference>
<dbReference type="Pfam" id="PF08564">
    <property type="entry name" value="CDC37_C"/>
    <property type="match status" value="1"/>
</dbReference>
<dbReference type="Pfam" id="PF08565">
    <property type="entry name" value="CDC37_M"/>
    <property type="match status" value="1"/>
</dbReference>
<dbReference type="Pfam" id="PF03234">
    <property type="entry name" value="CDC37_N"/>
    <property type="match status" value="1"/>
</dbReference>
<dbReference type="SMART" id="SM01069">
    <property type="entry name" value="CDC37_C"/>
    <property type="match status" value="1"/>
</dbReference>
<dbReference type="SMART" id="SM01070">
    <property type="entry name" value="CDC37_M"/>
    <property type="match status" value="1"/>
</dbReference>
<dbReference type="SMART" id="SM01071">
    <property type="entry name" value="CDC37_N"/>
    <property type="match status" value="1"/>
</dbReference>
<dbReference type="SUPFAM" id="SSF101391">
    <property type="entry name" value="Hsp90 co-chaperone CDC37"/>
    <property type="match status" value="1"/>
</dbReference>
<protein>
    <recommendedName>
        <fullName>Hsp90 co-chaperone Cdc37</fullName>
    </recommendedName>
    <alternativeName>
        <fullName>Hsp90 chaperone protein kinase-targeting subunit</fullName>
    </alternativeName>
    <alternativeName>
        <fullName>p50Cdc37</fullName>
    </alternativeName>
    <component>
        <recommendedName>
            <fullName>Hsp90 co-chaperone Cdc37, N-terminally processed</fullName>
        </recommendedName>
    </component>
</protein>
<sequence length="379" mass="44510">MVDYSVWDHIEVSDDEDETHPNIDTASLFRWRHQARVERMEQFQKEKEELDRGCRECKRKVAECQRKLKELEVAEGGGQVELERLRAEAQQLRKEERSWEQKLEDMRKKEKNMPWNVDTLSKDGFSKSMVNTKPEKAEEDSEEAREQKHKTFVEKYEKQIKHFGMLHRWDDSQKYLSDNVHLVCEETANYLVIWCIDLEVEEKCALMEQVAHQTMVMQFILELAKSLKVDPRACFRQFFTKIKTADQQYMEGFKYELEAFKERVRGRAKLRIEKAMKEYEEEERKKRLGPGGLDPVEVYESLPEELQKCFDVKDVQMLQDAISKMDPTDAKYHMQRCIDSGLWVPNSKSGEAKEGEEAGPGDPLLEAVPKAGNEKDISA</sequence>
<reference key="1">
    <citation type="journal article" date="1995" name="DNA Cell Biol.">
        <title>Molecular cloning and cell cycle-dependent expression of a novel gene that is homologous to cdc37.</title>
        <authorList>
            <person name="Ozaki T."/>
            <person name="Irie K."/>
            <person name="Sakiyama S."/>
        </authorList>
    </citation>
    <scope>NUCLEOTIDE SEQUENCE [MRNA]</scope>
</reference>
<reference key="2">
    <citation type="submission" date="2002-11" db="EMBL/GenBank/DDBJ databases">
        <title>Coding region of rat Cdc37, a kinase-associated HSP90 co-chaperone.</title>
        <authorList>
            <person name="Miyata Y."/>
        </authorList>
    </citation>
    <scope>NUCLEOTIDE SEQUENCE [MRNA]</scope>
</reference>
<reference key="3">
    <citation type="journal article" date="2004" name="Genome Res.">
        <title>The status, quality, and expansion of the NIH full-length cDNA project: the Mammalian Gene Collection (MGC).</title>
        <authorList>
            <consortium name="The MGC Project Team"/>
        </authorList>
    </citation>
    <scope>NUCLEOTIDE SEQUENCE [LARGE SCALE MRNA]</scope>
    <source>
        <tissue>Prostate</tissue>
    </source>
</reference>
<reference key="4">
    <citation type="journal article" date="1996" name="DNA Cell Biol.">
        <title>Interaction of rat Cdc37-related protein with retinoblastoma gene product.</title>
        <authorList>
            <person name="Ozaki T."/>
            <person name="Sakiyama S."/>
        </authorList>
    </citation>
    <scope>INTERACTION WITH RB1</scope>
</reference>
<reference key="5">
    <citation type="journal article" date="2012" name="Nat. Commun.">
        <title>Quantitative maps of protein phosphorylation sites across 14 different rat organs and tissues.</title>
        <authorList>
            <person name="Lundby A."/>
            <person name="Secher A."/>
            <person name="Lage K."/>
            <person name="Nordsborg N.B."/>
            <person name="Dmytriyev A."/>
            <person name="Lundby C."/>
            <person name="Olsen J.V."/>
        </authorList>
    </citation>
    <scope>PHOSPHORYLATION [LARGE SCALE ANALYSIS] AT SER-13</scope>
    <scope>IDENTIFICATION BY MASS SPECTROMETRY [LARGE SCALE ANALYSIS]</scope>
</reference>
<feature type="chain" id="PRO_0000423199" description="Hsp90 co-chaperone Cdc37">
    <location>
        <begin position="1"/>
        <end position="379"/>
    </location>
</feature>
<feature type="initiator methionine" description="Removed; alternate" evidence="1">
    <location>
        <position position="1"/>
    </location>
</feature>
<feature type="chain" id="PRO_0000195059" description="Hsp90 co-chaperone Cdc37, N-terminally processed">
    <location>
        <begin position="2"/>
        <end position="379"/>
    </location>
</feature>
<feature type="region of interest" description="Disordered" evidence="2">
    <location>
        <begin position="123"/>
        <end position="146"/>
    </location>
</feature>
<feature type="region of interest" description="Disordered" evidence="2">
    <location>
        <begin position="344"/>
        <end position="379"/>
    </location>
</feature>
<feature type="modified residue" description="N-acetylmethionine" evidence="1">
    <location>
        <position position="1"/>
    </location>
</feature>
<feature type="modified residue" description="N-acetylvaline; in Hsp90 co-chaperone Cdc37, N-terminally processed" evidence="1">
    <location>
        <position position="2"/>
    </location>
</feature>
<feature type="modified residue" description="Phosphoserine" evidence="5">
    <location>
        <position position="13"/>
    </location>
</feature>
<feature type="modified residue" description="Phosphothreonine" evidence="1">
    <location>
        <position position="119"/>
    </location>
</feature>
<feature type="modified residue" description="Phosphoserine" evidence="1">
    <location>
        <position position="121"/>
    </location>
</feature>
<feature type="modified residue" description="N6-acetyllysine" evidence="1">
    <location>
        <position position="155"/>
    </location>
</feature>
<feature type="modified residue" description="Phosphoserine" evidence="1">
    <location>
        <position position="378"/>
    </location>
</feature>
<feature type="sequence conflict" description="In Ref. 1; BAA05618." evidence="4" ref="1">
    <original>C</original>
    <variation>F</variation>
    <location>
        <position position="64"/>
    </location>
</feature>
<feature type="sequence conflict" description="In Ref. 1; BAA05618." evidence="4" ref="1">
    <original>SWEQKLEDMR</original>
    <variation>TGSRSWRTCG</variation>
    <location>
        <begin position="98"/>
        <end position="107"/>
    </location>
</feature>
<feature type="sequence conflict" description="In Ref. 1; BAA05618." evidence="4" ref="1">
    <original>N</original>
    <variation>F</variation>
    <location>
        <position position="373"/>
    </location>
</feature>